<reference key="1">
    <citation type="journal article" date="2007" name="Nat. Genet.">
        <title>Genomic analysis of Bartonella identifies type IV secretion systems as host adaptability factors.</title>
        <authorList>
            <person name="Saenz H.L."/>
            <person name="Engel P."/>
            <person name="Stoeckli M.C."/>
            <person name="Lanz C."/>
            <person name="Raddatz G."/>
            <person name="Vayssier-Taussat M."/>
            <person name="Birtles R."/>
            <person name="Schuster S.C."/>
            <person name="Dehio C."/>
        </authorList>
    </citation>
    <scope>NUCLEOTIDE SEQUENCE [LARGE SCALE GENOMIC DNA]</scope>
    <source>
        <strain>CIP 105476 / IBS 506</strain>
    </source>
</reference>
<feature type="chain" id="PRO_1000087889" description="Bifunctional protein FolD">
    <location>
        <begin position="1"/>
        <end position="299"/>
    </location>
</feature>
<feature type="binding site" evidence="1">
    <location>
        <begin position="168"/>
        <end position="170"/>
    </location>
    <ligand>
        <name>NADP(+)</name>
        <dbReference type="ChEBI" id="CHEBI:58349"/>
    </ligand>
</feature>
<feature type="binding site" evidence="1">
    <location>
        <position position="193"/>
    </location>
    <ligand>
        <name>NADP(+)</name>
        <dbReference type="ChEBI" id="CHEBI:58349"/>
    </ligand>
</feature>
<feature type="binding site" evidence="1">
    <location>
        <position position="234"/>
    </location>
    <ligand>
        <name>NADP(+)</name>
        <dbReference type="ChEBI" id="CHEBI:58349"/>
    </ligand>
</feature>
<protein>
    <recommendedName>
        <fullName evidence="1">Bifunctional protein FolD</fullName>
    </recommendedName>
    <domain>
        <recommendedName>
            <fullName evidence="1">Methylenetetrahydrofolate dehydrogenase</fullName>
            <ecNumber evidence="1">1.5.1.5</ecNumber>
        </recommendedName>
    </domain>
    <domain>
        <recommendedName>
            <fullName evidence="1">Methenyltetrahydrofolate cyclohydrolase</fullName>
            <ecNumber evidence="1">3.5.4.9</ecNumber>
        </recommendedName>
    </domain>
</protein>
<accession>A9IQD2</accession>
<organism>
    <name type="scientific">Bartonella tribocorum (strain CIP 105476 / IBS 506)</name>
    <dbReference type="NCBI Taxonomy" id="382640"/>
    <lineage>
        <taxon>Bacteria</taxon>
        <taxon>Pseudomonadati</taxon>
        <taxon>Pseudomonadota</taxon>
        <taxon>Alphaproteobacteria</taxon>
        <taxon>Hyphomicrobiales</taxon>
        <taxon>Bartonellaceae</taxon>
        <taxon>Bartonella</taxon>
    </lineage>
</organism>
<evidence type="ECO:0000255" key="1">
    <source>
        <dbReference type="HAMAP-Rule" id="MF_01576"/>
    </source>
</evidence>
<proteinExistence type="inferred from homology"/>
<dbReference type="EC" id="1.5.1.5" evidence="1"/>
<dbReference type="EC" id="3.5.4.9" evidence="1"/>
<dbReference type="EMBL" id="AM260525">
    <property type="protein sequence ID" value="CAK01042.1"/>
    <property type="molecule type" value="Genomic_DNA"/>
</dbReference>
<dbReference type="RefSeq" id="WP_012231128.1">
    <property type="nucleotide sequence ID" value="NC_010161.1"/>
</dbReference>
<dbReference type="SMR" id="A9IQD2"/>
<dbReference type="KEGG" id="btr:BT_0602"/>
<dbReference type="eggNOG" id="COG0190">
    <property type="taxonomic scope" value="Bacteria"/>
</dbReference>
<dbReference type="HOGENOM" id="CLU_034045_1_2_5"/>
<dbReference type="UniPathway" id="UPA00193"/>
<dbReference type="Proteomes" id="UP000001592">
    <property type="component" value="Chromosome"/>
</dbReference>
<dbReference type="GO" id="GO:0005829">
    <property type="term" value="C:cytosol"/>
    <property type="evidence" value="ECO:0007669"/>
    <property type="project" value="TreeGrafter"/>
</dbReference>
<dbReference type="GO" id="GO:0004477">
    <property type="term" value="F:methenyltetrahydrofolate cyclohydrolase activity"/>
    <property type="evidence" value="ECO:0007669"/>
    <property type="project" value="UniProtKB-UniRule"/>
</dbReference>
<dbReference type="GO" id="GO:0004488">
    <property type="term" value="F:methylenetetrahydrofolate dehydrogenase (NADP+) activity"/>
    <property type="evidence" value="ECO:0007669"/>
    <property type="project" value="UniProtKB-UniRule"/>
</dbReference>
<dbReference type="GO" id="GO:0000105">
    <property type="term" value="P:L-histidine biosynthetic process"/>
    <property type="evidence" value="ECO:0007669"/>
    <property type="project" value="UniProtKB-KW"/>
</dbReference>
<dbReference type="GO" id="GO:0009086">
    <property type="term" value="P:methionine biosynthetic process"/>
    <property type="evidence" value="ECO:0007669"/>
    <property type="project" value="UniProtKB-KW"/>
</dbReference>
<dbReference type="GO" id="GO:0006164">
    <property type="term" value="P:purine nucleotide biosynthetic process"/>
    <property type="evidence" value="ECO:0007669"/>
    <property type="project" value="UniProtKB-KW"/>
</dbReference>
<dbReference type="GO" id="GO:0035999">
    <property type="term" value="P:tetrahydrofolate interconversion"/>
    <property type="evidence" value="ECO:0007669"/>
    <property type="project" value="UniProtKB-UniRule"/>
</dbReference>
<dbReference type="CDD" id="cd01080">
    <property type="entry name" value="NAD_bind_m-THF_DH_Cyclohyd"/>
    <property type="match status" value="1"/>
</dbReference>
<dbReference type="FunFam" id="3.40.50.720:FF:000006">
    <property type="entry name" value="Bifunctional protein FolD"/>
    <property type="match status" value="1"/>
</dbReference>
<dbReference type="FunFam" id="3.40.50.10860:FF:000005">
    <property type="entry name" value="C-1-tetrahydrofolate synthase, cytoplasmic, putative"/>
    <property type="match status" value="1"/>
</dbReference>
<dbReference type="Gene3D" id="3.40.50.10860">
    <property type="entry name" value="Leucine Dehydrogenase, chain A, domain 1"/>
    <property type="match status" value="1"/>
</dbReference>
<dbReference type="Gene3D" id="3.40.50.720">
    <property type="entry name" value="NAD(P)-binding Rossmann-like Domain"/>
    <property type="match status" value="1"/>
</dbReference>
<dbReference type="HAMAP" id="MF_01576">
    <property type="entry name" value="THF_DHG_CYH"/>
    <property type="match status" value="1"/>
</dbReference>
<dbReference type="InterPro" id="IPR046346">
    <property type="entry name" value="Aminoacid_DH-like_N_sf"/>
</dbReference>
<dbReference type="InterPro" id="IPR036291">
    <property type="entry name" value="NAD(P)-bd_dom_sf"/>
</dbReference>
<dbReference type="InterPro" id="IPR000672">
    <property type="entry name" value="THF_DH/CycHdrlase"/>
</dbReference>
<dbReference type="InterPro" id="IPR020630">
    <property type="entry name" value="THF_DH/CycHdrlase_cat_dom"/>
</dbReference>
<dbReference type="InterPro" id="IPR020867">
    <property type="entry name" value="THF_DH/CycHdrlase_CS"/>
</dbReference>
<dbReference type="InterPro" id="IPR020631">
    <property type="entry name" value="THF_DH/CycHdrlase_NAD-bd_dom"/>
</dbReference>
<dbReference type="NCBIfam" id="NF010783">
    <property type="entry name" value="PRK14186.1"/>
    <property type="match status" value="1"/>
</dbReference>
<dbReference type="NCBIfam" id="NF010785">
    <property type="entry name" value="PRK14188.1"/>
    <property type="match status" value="1"/>
</dbReference>
<dbReference type="PANTHER" id="PTHR48099:SF5">
    <property type="entry name" value="C-1-TETRAHYDROFOLATE SYNTHASE, CYTOPLASMIC"/>
    <property type="match status" value="1"/>
</dbReference>
<dbReference type="PANTHER" id="PTHR48099">
    <property type="entry name" value="C-1-TETRAHYDROFOLATE SYNTHASE, CYTOPLASMIC-RELATED"/>
    <property type="match status" value="1"/>
</dbReference>
<dbReference type="Pfam" id="PF00763">
    <property type="entry name" value="THF_DHG_CYH"/>
    <property type="match status" value="1"/>
</dbReference>
<dbReference type="Pfam" id="PF02882">
    <property type="entry name" value="THF_DHG_CYH_C"/>
    <property type="match status" value="1"/>
</dbReference>
<dbReference type="PRINTS" id="PR00085">
    <property type="entry name" value="THFDHDRGNASE"/>
</dbReference>
<dbReference type="SUPFAM" id="SSF53223">
    <property type="entry name" value="Aminoacid dehydrogenase-like, N-terminal domain"/>
    <property type="match status" value="1"/>
</dbReference>
<dbReference type="SUPFAM" id="SSF51735">
    <property type="entry name" value="NAD(P)-binding Rossmann-fold domains"/>
    <property type="match status" value="1"/>
</dbReference>
<dbReference type="PROSITE" id="PS00766">
    <property type="entry name" value="THF_DHG_CYH_1"/>
    <property type="match status" value="1"/>
</dbReference>
<dbReference type="PROSITE" id="PS00767">
    <property type="entry name" value="THF_DHG_CYH_2"/>
    <property type="match status" value="1"/>
</dbReference>
<sequence>MNNIIDGKKLAEEIIVKVKAETIKLRNNYNIQPGIAVIIVGDDPASQVYVASKNKKAEECGFLSIKHVVSKETQEKELLQLIATLNSDPKIHGILVQLPLPAHINTNRITQAVAFQKDVDGFHYVNVGKLAANALEDAIIPCTPAGAMMMIEQHCGRDLSGLDAVVVGRSNIVGKPMAALLTAANATVTIAHSRTRDLDDVCRSADILVAAVGRPQMIKKDWIKKDAIVIDVGINRIPAPEKGVGKTHLIGDVDFENVKEKAAAITPVPGGVGPMTIAMLMVNTLKAAARLHNLPIPKF</sequence>
<gene>
    <name evidence="1" type="primary">folD</name>
    <name type="ordered locus">BT_0602</name>
</gene>
<name>FOLD_BART1</name>
<keyword id="KW-0028">Amino-acid biosynthesis</keyword>
<keyword id="KW-0368">Histidine biosynthesis</keyword>
<keyword id="KW-0378">Hydrolase</keyword>
<keyword id="KW-0486">Methionine biosynthesis</keyword>
<keyword id="KW-0511">Multifunctional enzyme</keyword>
<keyword id="KW-0521">NADP</keyword>
<keyword id="KW-0554">One-carbon metabolism</keyword>
<keyword id="KW-0560">Oxidoreductase</keyword>
<keyword id="KW-0658">Purine biosynthesis</keyword>
<comment type="function">
    <text evidence="1">Catalyzes the oxidation of 5,10-methylenetetrahydrofolate to 5,10-methenyltetrahydrofolate and then the hydrolysis of 5,10-methenyltetrahydrofolate to 10-formyltetrahydrofolate.</text>
</comment>
<comment type="catalytic activity">
    <reaction evidence="1">
        <text>(6R)-5,10-methylene-5,6,7,8-tetrahydrofolate + NADP(+) = (6R)-5,10-methenyltetrahydrofolate + NADPH</text>
        <dbReference type="Rhea" id="RHEA:22812"/>
        <dbReference type="ChEBI" id="CHEBI:15636"/>
        <dbReference type="ChEBI" id="CHEBI:57455"/>
        <dbReference type="ChEBI" id="CHEBI:57783"/>
        <dbReference type="ChEBI" id="CHEBI:58349"/>
        <dbReference type="EC" id="1.5.1.5"/>
    </reaction>
</comment>
<comment type="catalytic activity">
    <reaction evidence="1">
        <text>(6R)-5,10-methenyltetrahydrofolate + H2O = (6R)-10-formyltetrahydrofolate + H(+)</text>
        <dbReference type="Rhea" id="RHEA:23700"/>
        <dbReference type="ChEBI" id="CHEBI:15377"/>
        <dbReference type="ChEBI" id="CHEBI:15378"/>
        <dbReference type="ChEBI" id="CHEBI:57455"/>
        <dbReference type="ChEBI" id="CHEBI:195366"/>
        <dbReference type="EC" id="3.5.4.9"/>
    </reaction>
</comment>
<comment type="pathway">
    <text evidence="1">One-carbon metabolism; tetrahydrofolate interconversion.</text>
</comment>
<comment type="subunit">
    <text evidence="1">Homodimer.</text>
</comment>
<comment type="similarity">
    <text evidence="1">Belongs to the tetrahydrofolate dehydrogenase/cyclohydrolase family.</text>
</comment>